<geneLocation type="chloroplast"/>
<accession>Q9BA49</accession>
<accession>Q9GD52</accession>
<protein>
    <recommendedName>
        <fullName evidence="1">Ribulose bisphosphate carboxylase large chain</fullName>
        <shortName evidence="1">RuBisCO large subunit</shortName>
        <ecNumber evidence="1">4.1.1.39</ecNumber>
    </recommendedName>
</protein>
<dbReference type="EC" id="4.1.1.39" evidence="1"/>
<dbReference type="EMBL" id="AY012476">
    <property type="protein sequence ID" value="AAK14861.1"/>
    <property type="molecule type" value="Genomic_DNA"/>
</dbReference>
<dbReference type="EMBL" id="AJ404785">
    <property type="protein sequence ID" value="CAC17891.1"/>
    <property type="molecule type" value="Genomic_DNA"/>
</dbReference>
<dbReference type="SMR" id="Q9BA49"/>
<dbReference type="GO" id="GO:0009507">
    <property type="term" value="C:chloroplast"/>
    <property type="evidence" value="ECO:0007669"/>
    <property type="project" value="UniProtKB-SubCell"/>
</dbReference>
<dbReference type="GO" id="GO:0000287">
    <property type="term" value="F:magnesium ion binding"/>
    <property type="evidence" value="ECO:0007669"/>
    <property type="project" value="UniProtKB-UniRule"/>
</dbReference>
<dbReference type="GO" id="GO:0004497">
    <property type="term" value="F:monooxygenase activity"/>
    <property type="evidence" value="ECO:0007669"/>
    <property type="project" value="UniProtKB-KW"/>
</dbReference>
<dbReference type="GO" id="GO:0016984">
    <property type="term" value="F:ribulose-bisphosphate carboxylase activity"/>
    <property type="evidence" value="ECO:0007669"/>
    <property type="project" value="UniProtKB-UniRule"/>
</dbReference>
<dbReference type="GO" id="GO:0009853">
    <property type="term" value="P:photorespiration"/>
    <property type="evidence" value="ECO:0007669"/>
    <property type="project" value="UniProtKB-KW"/>
</dbReference>
<dbReference type="GO" id="GO:0019253">
    <property type="term" value="P:reductive pentose-phosphate cycle"/>
    <property type="evidence" value="ECO:0007669"/>
    <property type="project" value="UniProtKB-UniRule"/>
</dbReference>
<dbReference type="CDD" id="cd08212">
    <property type="entry name" value="RuBisCO_large_I"/>
    <property type="match status" value="1"/>
</dbReference>
<dbReference type="FunFam" id="3.20.20.110:FF:000001">
    <property type="entry name" value="Ribulose bisphosphate carboxylase large chain"/>
    <property type="match status" value="1"/>
</dbReference>
<dbReference type="FunFam" id="3.30.70.150:FF:000001">
    <property type="entry name" value="Ribulose bisphosphate carboxylase large chain"/>
    <property type="match status" value="1"/>
</dbReference>
<dbReference type="Gene3D" id="3.20.20.110">
    <property type="entry name" value="Ribulose bisphosphate carboxylase, large subunit, C-terminal domain"/>
    <property type="match status" value="1"/>
</dbReference>
<dbReference type="Gene3D" id="3.30.70.150">
    <property type="entry name" value="RuBisCO large subunit, N-terminal domain"/>
    <property type="match status" value="1"/>
</dbReference>
<dbReference type="HAMAP" id="MF_01338">
    <property type="entry name" value="RuBisCO_L_type1"/>
    <property type="match status" value="1"/>
</dbReference>
<dbReference type="InterPro" id="IPR033966">
    <property type="entry name" value="RuBisCO"/>
</dbReference>
<dbReference type="InterPro" id="IPR020878">
    <property type="entry name" value="RuBisCo_large_chain_AS"/>
</dbReference>
<dbReference type="InterPro" id="IPR000685">
    <property type="entry name" value="RuBisCO_lsu_C"/>
</dbReference>
<dbReference type="InterPro" id="IPR036376">
    <property type="entry name" value="RuBisCO_lsu_C_sf"/>
</dbReference>
<dbReference type="InterPro" id="IPR017443">
    <property type="entry name" value="RuBisCO_lsu_fd_N"/>
</dbReference>
<dbReference type="InterPro" id="IPR036422">
    <property type="entry name" value="RuBisCO_lsu_N_sf"/>
</dbReference>
<dbReference type="InterPro" id="IPR020888">
    <property type="entry name" value="RuBisCO_lsuI"/>
</dbReference>
<dbReference type="NCBIfam" id="NF003252">
    <property type="entry name" value="PRK04208.1"/>
    <property type="match status" value="1"/>
</dbReference>
<dbReference type="PANTHER" id="PTHR42704">
    <property type="entry name" value="RIBULOSE BISPHOSPHATE CARBOXYLASE"/>
    <property type="match status" value="1"/>
</dbReference>
<dbReference type="PANTHER" id="PTHR42704:SF16">
    <property type="entry name" value="RIBULOSE BISPHOSPHATE CARBOXYLASE LARGE CHAIN"/>
    <property type="match status" value="1"/>
</dbReference>
<dbReference type="Pfam" id="PF00016">
    <property type="entry name" value="RuBisCO_large"/>
    <property type="match status" value="1"/>
</dbReference>
<dbReference type="Pfam" id="PF02788">
    <property type="entry name" value="RuBisCO_large_N"/>
    <property type="match status" value="1"/>
</dbReference>
<dbReference type="SFLD" id="SFLDG01052">
    <property type="entry name" value="RuBisCO"/>
    <property type="match status" value="1"/>
</dbReference>
<dbReference type="SFLD" id="SFLDS00014">
    <property type="entry name" value="RuBisCO"/>
    <property type="match status" value="1"/>
</dbReference>
<dbReference type="SFLD" id="SFLDG00301">
    <property type="entry name" value="RuBisCO-like_proteins"/>
    <property type="match status" value="1"/>
</dbReference>
<dbReference type="SUPFAM" id="SSF51649">
    <property type="entry name" value="RuBisCo, C-terminal domain"/>
    <property type="match status" value="1"/>
</dbReference>
<dbReference type="SUPFAM" id="SSF54966">
    <property type="entry name" value="RuBisCO, large subunit, small (N-terminal) domain"/>
    <property type="match status" value="1"/>
</dbReference>
<dbReference type="PROSITE" id="PS00157">
    <property type="entry name" value="RUBISCO_LARGE"/>
    <property type="match status" value="1"/>
</dbReference>
<sequence length="477" mass="52962">MSPQTETKASVGFKAGVKDYKLTYYTPDYETKDTDILAAFRVTPQPGVPPEEAGAAVAAESSTGTWTTVWTDGLTSLDRYKGRCYHIETVVGEENQYIAYVAYPLDLFEEGSVTNMFTSIVGNVFGFKALRALRLEDLRIPPSYSKTFQGPPHGIQVERDKLNKYGRPLLGCTIKPKLGLSAKNYGRAVYECLRGGLDFTKDDENVNSQPFMRWRDRFLFCAEAIYKAQAETGEIKGHYLNATAGTCEEMIKRAVCARELGVPIVMHDYLTGGFTANTSLAHYCRDNGLLLHIHRAMHAVIDRQKNHGMHFRVLAKALRMSGGDHIHAGTVVGKLEGEREMTLGFVDLLRDDFIEKDRSRGIFFTQDWVSMPGVIPVASGGIHVWHMPALTEIFGDDSVLQFGGGTLGHPWGNAPGAVANRVALEACVQARNEGRDLAREGNEIIREASKWSPELAAACEVWKEIKFEFDPVDKLDK</sequence>
<keyword id="KW-0007">Acetylation</keyword>
<keyword id="KW-0113">Calvin cycle</keyword>
<keyword id="KW-0120">Carbon dioxide fixation</keyword>
<keyword id="KW-0150">Chloroplast</keyword>
<keyword id="KW-1015">Disulfide bond</keyword>
<keyword id="KW-0456">Lyase</keyword>
<keyword id="KW-0460">Magnesium</keyword>
<keyword id="KW-0479">Metal-binding</keyword>
<keyword id="KW-0488">Methylation</keyword>
<keyword id="KW-0503">Monooxygenase</keyword>
<keyword id="KW-0560">Oxidoreductase</keyword>
<keyword id="KW-0601">Photorespiration</keyword>
<keyword id="KW-0602">Photosynthesis</keyword>
<keyword id="KW-0934">Plastid</keyword>
<feature type="propeptide" id="PRO_0000031255" evidence="1">
    <location>
        <begin position="1"/>
        <end position="2"/>
    </location>
</feature>
<feature type="chain" id="PRO_0000031256" description="Ribulose bisphosphate carboxylase large chain">
    <location>
        <begin position="3"/>
        <end position="477"/>
    </location>
</feature>
<feature type="active site" description="Proton acceptor" evidence="1">
    <location>
        <position position="175"/>
    </location>
</feature>
<feature type="active site" description="Proton acceptor" evidence="1">
    <location>
        <position position="294"/>
    </location>
</feature>
<feature type="binding site" description="in homodimeric partner" evidence="1">
    <location>
        <position position="123"/>
    </location>
    <ligand>
        <name>substrate</name>
    </ligand>
</feature>
<feature type="binding site" evidence="1">
    <location>
        <position position="173"/>
    </location>
    <ligand>
        <name>substrate</name>
    </ligand>
</feature>
<feature type="binding site" evidence="1">
    <location>
        <position position="177"/>
    </location>
    <ligand>
        <name>substrate</name>
    </ligand>
</feature>
<feature type="binding site" description="via carbamate group" evidence="1">
    <location>
        <position position="201"/>
    </location>
    <ligand>
        <name>Mg(2+)</name>
        <dbReference type="ChEBI" id="CHEBI:18420"/>
    </ligand>
</feature>
<feature type="binding site" evidence="1">
    <location>
        <position position="203"/>
    </location>
    <ligand>
        <name>Mg(2+)</name>
        <dbReference type="ChEBI" id="CHEBI:18420"/>
    </ligand>
</feature>
<feature type="binding site" evidence="1">
    <location>
        <position position="204"/>
    </location>
    <ligand>
        <name>Mg(2+)</name>
        <dbReference type="ChEBI" id="CHEBI:18420"/>
    </ligand>
</feature>
<feature type="binding site" evidence="1">
    <location>
        <position position="295"/>
    </location>
    <ligand>
        <name>substrate</name>
    </ligand>
</feature>
<feature type="binding site" evidence="1">
    <location>
        <position position="327"/>
    </location>
    <ligand>
        <name>substrate</name>
    </ligand>
</feature>
<feature type="binding site" evidence="1">
    <location>
        <position position="379"/>
    </location>
    <ligand>
        <name>substrate</name>
    </ligand>
</feature>
<feature type="site" description="Transition state stabilizer" evidence="1">
    <location>
        <position position="334"/>
    </location>
</feature>
<feature type="modified residue" description="N-acetylproline" evidence="1">
    <location>
        <position position="3"/>
    </location>
</feature>
<feature type="modified residue" description="N6,N6,N6-trimethyllysine" evidence="1">
    <location>
        <position position="14"/>
    </location>
</feature>
<feature type="modified residue" description="N6-carboxylysine" evidence="1">
    <location>
        <position position="201"/>
    </location>
</feature>
<feature type="disulfide bond" description="Interchain; in linked form" evidence="1">
    <location>
        <position position="247"/>
    </location>
</feature>
<feature type="sequence conflict" description="In Ref. 2; CAC17891." evidence="2" ref="2">
    <original>P</original>
    <variation>T</variation>
    <location>
        <position position="142"/>
    </location>
</feature>
<organism>
    <name type="scientific">Hyophorbe lagenicaulis</name>
    <name type="common">Bottle palm</name>
    <dbReference type="NCBI Taxonomy" id="115475"/>
    <lineage>
        <taxon>Eukaryota</taxon>
        <taxon>Viridiplantae</taxon>
        <taxon>Streptophyta</taxon>
        <taxon>Embryophyta</taxon>
        <taxon>Tracheophyta</taxon>
        <taxon>Spermatophyta</taxon>
        <taxon>Magnoliopsida</taxon>
        <taxon>Liliopsida</taxon>
        <taxon>Arecaceae</taxon>
        <taxon>Arecoideae</taxon>
        <taxon>Chamaedoreeae</taxon>
        <taxon>Hyophorbe</taxon>
    </lineage>
</organism>
<name>RBL_HYOLA</name>
<gene>
    <name evidence="1" type="primary">rbcL</name>
</gene>
<proteinExistence type="inferred from homology"/>
<reference key="1">
    <citation type="journal article" date="2002" name="Syst. Biol.">
        <title>A molecular phylogenetic study of the Palmae (Arecaceae) based on atpB, rbcL, and 18S nrDNA sequences.</title>
        <authorList>
            <person name="Hahn W.J."/>
        </authorList>
    </citation>
    <scope>NUCLEOTIDE SEQUENCE [GENOMIC DNA]</scope>
</reference>
<reference key="2">
    <citation type="journal article" date="2001" name="Am. J. Bot.">
        <title>Coding and noncoding plastid DNA in palm systematics.</title>
        <authorList>
            <person name="Asmussen C.B."/>
            <person name="Chase M.W."/>
        </authorList>
    </citation>
    <scope>NUCLEOTIDE SEQUENCE [GENOMIC DNA] OF 4-476</scope>
    <source>
        <tissue>Leaf</tissue>
    </source>
</reference>
<evidence type="ECO:0000255" key="1">
    <source>
        <dbReference type="HAMAP-Rule" id="MF_01338"/>
    </source>
</evidence>
<evidence type="ECO:0000305" key="2"/>
<comment type="function">
    <text evidence="1">RuBisCO catalyzes two reactions: the carboxylation of D-ribulose 1,5-bisphosphate, the primary event in carbon dioxide fixation, as well as the oxidative fragmentation of the pentose substrate in the photorespiration process. Both reactions occur simultaneously and in competition at the same active site.</text>
</comment>
<comment type="catalytic activity">
    <reaction evidence="1">
        <text>2 (2R)-3-phosphoglycerate + 2 H(+) = D-ribulose 1,5-bisphosphate + CO2 + H2O</text>
        <dbReference type="Rhea" id="RHEA:23124"/>
        <dbReference type="ChEBI" id="CHEBI:15377"/>
        <dbReference type="ChEBI" id="CHEBI:15378"/>
        <dbReference type="ChEBI" id="CHEBI:16526"/>
        <dbReference type="ChEBI" id="CHEBI:57870"/>
        <dbReference type="ChEBI" id="CHEBI:58272"/>
        <dbReference type="EC" id="4.1.1.39"/>
    </reaction>
</comment>
<comment type="catalytic activity">
    <reaction evidence="1">
        <text>D-ribulose 1,5-bisphosphate + O2 = 2-phosphoglycolate + (2R)-3-phosphoglycerate + 2 H(+)</text>
        <dbReference type="Rhea" id="RHEA:36631"/>
        <dbReference type="ChEBI" id="CHEBI:15378"/>
        <dbReference type="ChEBI" id="CHEBI:15379"/>
        <dbReference type="ChEBI" id="CHEBI:57870"/>
        <dbReference type="ChEBI" id="CHEBI:58033"/>
        <dbReference type="ChEBI" id="CHEBI:58272"/>
    </reaction>
</comment>
<comment type="cofactor">
    <cofactor evidence="1">
        <name>Mg(2+)</name>
        <dbReference type="ChEBI" id="CHEBI:18420"/>
    </cofactor>
    <text evidence="1">Binds 1 Mg(2+) ion per subunit.</text>
</comment>
<comment type="subunit">
    <text evidence="1">Heterohexadecamer of 8 large chains and 8 small chains; disulfide-linked. The disulfide link is formed within the large subunit homodimers.</text>
</comment>
<comment type="subcellular location">
    <subcellularLocation>
        <location>Plastid</location>
        <location>Chloroplast</location>
    </subcellularLocation>
</comment>
<comment type="PTM">
    <text evidence="1">The disulfide bond which can form in the large chain dimeric partners within the hexadecamer appears to be associated with oxidative stress and protein turnover.</text>
</comment>
<comment type="miscellaneous">
    <text evidence="1">The basic functional RuBisCO is composed of a large chain homodimer in a 'head-to-tail' conformation. In form I RuBisCO this homodimer is arranged in a barrel-like tetramer with the small subunits forming a tetrameric 'cap' on each end of the 'barrel'.</text>
</comment>
<comment type="similarity">
    <text evidence="1">Belongs to the RuBisCO large chain family. Type I subfamily.</text>
</comment>